<gene>
    <name evidence="1" type="primary">groEL</name>
    <name evidence="1" type="synonym">groL</name>
    <name type="synonym">mopA</name>
</gene>
<protein>
    <recommendedName>
        <fullName evidence="1">Chaperonin GroEL</fullName>
        <ecNumber evidence="1">5.6.1.7</ecNumber>
    </recommendedName>
    <alternativeName>
        <fullName evidence="1">60 kDa chaperonin</fullName>
    </alternativeName>
    <alternativeName>
        <fullName evidence="1">Chaperonin-60</fullName>
        <shortName evidence="1">Cpn60</shortName>
    </alternativeName>
</protein>
<comment type="function">
    <text evidence="1">Together with its co-chaperonin GroES, plays an essential role in assisting protein folding. The GroEL-GroES system forms a nano-cage that allows encapsulation of the non-native substrate proteins and provides a physical environment optimized to promote and accelerate protein folding.</text>
</comment>
<comment type="catalytic activity">
    <reaction evidence="1">
        <text>ATP + H2O + a folded polypeptide = ADP + phosphate + an unfolded polypeptide.</text>
        <dbReference type="EC" id="5.6.1.7"/>
    </reaction>
</comment>
<comment type="subunit">
    <text evidence="1">Forms a cylinder of 14 subunits composed of two heptameric rings stacked back-to-back. Interacts with the co-chaperonin GroES.</text>
</comment>
<comment type="subcellular location">
    <subcellularLocation>
        <location evidence="1">Cytoplasm</location>
    </subcellularLocation>
</comment>
<comment type="similarity">
    <text evidence="1">Belongs to the chaperonin (HSP60) family.</text>
</comment>
<name>CH60_ENTAS</name>
<proteinExistence type="inferred from homology"/>
<keyword id="KW-0067">ATP-binding</keyword>
<keyword id="KW-0143">Chaperone</keyword>
<keyword id="KW-0963">Cytoplasm</keyword>
<keyword id="KW-0413">Isomerase</keyword>
<keyword id="KW-0547">Nucleotide-binding</keyword>
<evidence type="ECO:0000255" key="1">
    <source>
        <dbReference type="HAMAP-Rule" id="MF_00600"/>
    </source>
</evidence>
<organism>
    <name type="scientific">Enterobacter asburiae</name>
    <dbReference type="NCBI Taxonomy" id="61645"/>
    <lineage>
        <taxon>Bacteria</taxon>
        <taxon>Pseudomonadati</taxon>
        <taxon>Pseudomonadota</taxon>
        <taxon>Gammaproteobacteria</taxon>
        <taxon>Enterobacterales</taxon>
        <taxon>Enterobacteriaceae</taxon>
        <taxon>Enterobacter</taxon>
        <taxon>Enterobacter cloacae complex</taxon>
    </lineage>
</organism>
<accession>O66190</accession>
<sequence>MAAKDVKFGNDARVKMLRGVNVLADAVKVTLGPKGRNVVLDKSFGAPTITKDGVSVAREIELEDKFENMGAQMVKEVASKANDAAGDGTTTATVLAQAIITEGLKAVAAGMNPMDLKRGIDKAVTAAVEELKALSVPCSDSKAIAQVGTISANSDETVGKLIAEAMDKVGKEGVITVEDGTGLEDELDVVEGMQFDRGYLSPYFINKPETGAVELESPFILLADKKISNIREMLPVLEAVAKAGKPLVIIAEDVEGEALATLVVNTMRGIVKVAAVKAPGFGDRRKAMLQDIATLTGGTVISEEIGMELEKATLEDLGQAKRVVINKDTTTIIDGVGEEAAIQGRVGQIRKQIEEATSDYDREKLQERVAKLAGGVAVIKVGAATEVEMKEKKARVDDALHATRAAVEEGVVAGGGVALVRVAAKLAGLTAQNEDQNVGIKVALRAMEAPLRQIVSNAGEEPSVVTNNVKAGEGNYGYNAATEEYGNMIDFGILDPTKVTRSALQYAASVAGLMITTECMVTDLPKGDAPDLXAAGMGG</sequence>
<feature type="chain" id="PRO_0000063370" description="Chaperonin GroEL">
    <location>
        <begin position="1"/>
        <end position="539" status="greater than"/>
    </location>
</feature>
<feature type="binding site" evidence="1">
    <location>
        <begin position="30"/>
        <end position="33"/>
    </location>
    <ligand>
        <name>ATP</name>
        <dbReference type="ChEBI" id="CHEBI:30616"/>
    </ligand>
</feature>
<feature type="binding site" evidence="1">
    <location>
        <position position="51"/>
    </location>
    <ligand>
        <name>ATP</name>
        <dbReference type="ChEBI" id="CHEBI:30616"/>
    </ligand>
</feature>
<feature type="binding site" evidence="1">
    <location>
        <begin position="87"/>
        <end position="91"/>
    </location>
    <ligand>
        <name>ATP</name>
        <dbReference type="ChEBI" id="CHEBI:30616"/>
    </ligand>
</feature>
<feature type="binding site" evidence="1">
    <location>
        <position position="415"/>
    </location>
    <ligand>
        <name>ATP</name>
        <dbReference type="ChEBI" id="CHEBI:30616"/>
    </ligand>
</feature>
<feature type="binding site" evidence="1">
    <location>
        <begin position="479"/>
        <end position="481"/>
    </location>
    <ligand>
        <name>ATP</name>
        <dbReference type="ChEBI" id="CHEBI:30616"/>
    </ligand>
</feature>
<feature type="binding site" evidence="1">
    <location>
        <position position="495"/>
    </location>
    <ligand>
        <name>ATP</name>
        <dbReference type="ChEBI" id="CHEBI:30616"/>
    </ligand>
</feature>
<feature type="non-terminal residue">
    <location>
        <position position="539"/>
    </location>
</feature>
<reference key="1">
    <citation type="journal article" date="1997" name="J. Gen. Appl. Microbiol.">
        <title>Phylogenetical relationship based on groE genes among phenotypically related Enterobacter, Pantoea, Klebsiella, Serratia, and Erwinia species.</title>
        <authorList>
            <person name="Harada H."/>
            <person name="Ishikawa H."/>
        </authorList>
    </citation>
    <scope>NUCLEOTIDE SEQUENCE [GENOMIC DNA]</scope>
    <source>
        <strain>ATCC 35953 / DSM 17506 / CIP 103358 / JCM 6051 / KCTC 23920 / NBRC 109912 / NCTC 12123 / CDC 1497-78</strain>
    </source>
</reference>
<dbReference type="EC" id="5.6.1.7" evidence="1"/>
<dbReference type="EMBL" id="AB008137">
    <property type="protein sequence ID" value="BAA25207.1"/>
    <property type="molecule type" value="Genomic_DNA"/>
</dbReference>
<dbReference type="STRING" id="640513.Entas_0364"/>
<dbReference type="GO" id="GO:0005737">
    <property type="term" value="C:cytoplasm"/>
    <property type="evidence" value="ECO:0007669"/>
    <property type="project" value="UniProtKB-SubCell"/>
</dbReference>
<dbReference type="GO" id="GO:0005524">
    <property type="term" value="F:ATP binding"/>
    <property type="evidence" value="ECO:0007669"/>
    <property type="project" value="UniProtKB-KW"/>
</dbReference>
<dbReference type="GO" id="GO:0140662">
    <property type="term" value="F:ATP-dependent protein folding chaperone"/>
    <property type="evidence" value="ECO:0007669"/>
    <property type="project" value="InterPro"/>
</dbReference>
<dbReference type="GO" id="GO:0016853">
    <property type="term" value="F:isomerase activity"/>
    <property type="evidence" value="ECO:0007669"/>
    <property type="project" value="UniProtKB-KW"/>
</dbReference>
<dbReference type="GO" id="GO:0042026">
    <property type="term" value="P:protein refolding"/>
    <property type="evidence" value="ECO:0007669"/>
    <property type="project" value="InterPro"/>
</dbReference>
<dbReference type="CDD" id="cd03344">
    <property type="entry name" value="GroEL"/>
    <property type="match status" value="1"/>
</dbReference>
<dbReference type="FunFam" id="1.10.560.10:FF:000001">
    <property type="entry name" value="60 kDa chaperonin"/>
    <property type="match status" value="1"/>
</dbReference>
<dbReference type="FunFam" id="3.50.7.10:FF:000001">
    <property type="entry name" value="60 kDa chaperonin"/>
    <property type="match status" value="1"/>
</dbReference>
<dbReference type="Gene3D" id="3.50.7.10">
    <property type="entry name" value="GroEL"/>
    <property type="match status" value="1"/>
</dbReference>
<dbReference type="Gene3D" id="1.10.560.10">
    <property type="entry name" value="GroEL-like equatorial domain"/>
    <property type="match status" value="1"/>
</dbReference>
<dbReference type="Gene3D" id="3.30.260.10">
    <property type="entry name" value="TCP-1-like chaperonin intermediate domain"/>
    <property type="match status" value="1"/>
</dbReference>
<dbReference type="HAMAP" id="MF_00600">
    <property type="entry name" value="CH60"/>
    <property type="match status" value="1"/>
</dbReference>
<dbReference type="InterPro" id="IPR018370">
    <property type="entry name" value="Chaperonin_Cpn60_CS"/>
</dbReference>
<dbReference type="InterPro" id="IPR001844">
    <property type="entry name" value="Cpn60/GroEL"/>
</dbReference>
<dbReference type="InterPro" id="IPR002423">
    <property type="entry name" value="Cpn60/GroEL/TCP-1"/>
</dbReference>
<dbReference type="InterPro" id="IPR027409">
    <property type="entry name" value="GroEL-like_apical_dom_sf"/>
</dbReference>
<dbReference type="InterPro" id="IPR027413">
    <property type="entry name" value="GROEL-like_equatorial_sf"/>
</dbReference>
<dbReference type="InterPro" id="IPR027410">
    <property type="entry name" value="TCP-1-like_intermed_sf"/>
</dbReference>
<dbReference type="NCBIfam" id="TIGR02348">
    <property type="entry name" value="GroEL"/>
    <property type="match status" value="1"/>
</dbReference>
<dbReference type="NCBIfam" id="NF000592">
    <property type="entry name" value="PRK00013.1"/>
    <property type="match status" value="1"/>
</dbReference>
<dbReference type="NCBIfam" id="NF009487">
    <property type="entry name" value="PRK12849.1"/>
    <property type="match status" value="1"/>
</dbReference>
<dbReference type="NCBIfam" id="NF009488">
    <property type="entry name" value="PRK12850.1"/>
    <property type="match status" value="1"/>
</dbReference>
<dbReference type="NCBIfam" id="NF009489">
    <property type="entry name" value="PRK12851.1"/>
    <property type="match status" value="1"/>
</dbReference>
<dbReference type="PANTHER" id="PTHR45633">
    <property type="entry name" value="60 KDA HEAT SHOCK PROTEIN, MITOCHONDRIAL"/>
    <property type="match status" value="1"/>
</dbReference>
<dbReference type="Pfam" id="PF00118">
    <property type="entry name" value="Cpn60_TCP1"/>
    <property type="match status" value="1"/>
</dbReference>
<dbReference type="PRINTS" id="PR00298">
    <property type="entry name" value="CHAPERONIN60"/>
</dbReference>
<dbReference type="SUPFAM" id="SSF52029">
    <property type="entry name" value="GroEL apical domain-like"/>
    <property type="match status" value="1"/>
</dbReference>
<dbReference type="SUPFAM" id="SSF48592">
    <property type="entry name" value="GroEL equatorial domain-like"/>
    <property type="match status" value="1"/>
</dbReference>
<dbReference type="SUPFAM" id="SSF54849">
    <property type="entry name" value="GroEL-intermediate domain like"/>
    <property type="match status" value="1"/>
</dbReference>
<dbReference type="PROSITE" id="PS00296">
    <property type="entry name" value="CHAPERONINS_CPN60"/>
    <property type="match status" value="1"/>
</dbReference>